<protein>
    <recommendedName>
        <fullName>Putative clathrin assembly protein At5g57200</fullName>
    </recommendedName>
</protein>
<keyword id="KW-0168">Coated pit</keyword>
<keyword id="KW-0968">Cytoplasmic vesicle</keyword>
<keyword id="KW-0254">Endocytosis</keyword>
<keyword id="KW-0333">Golgi apparatus</keyword>
<keyword id="KW-0472">Membrane</keyword>
<keyword id="KW-1185">Reference proteome</keyword>
<name>CAP7_ARATH</name>
<reference key="1">
    <citation type="journal article" date="2000" name="DNA Res.">
        <title>Structural analysis of Arabidopsis thaliana chromosome 5. X. Sequence features of the regions of 3,076,755 bp covered by sixty P1 and TAC clones.</title>
        <authorList>
            <person name="Sato S."/>
            <person name="Nakamura Y."/>
            <person name="Kaneko T."/>
            <person name="Katoh T."/>
            <person name="Asamizu E."/>
            <person name="Kotani H."/>
            <person name="Tabata S."/>
        </authorList>
    </citation>
    <scope>NUCLEOTIDE SEQUENCE [LARGE SCALE GENOMIC DNA]</scope>
    <source>
        <strain>cv. Columbia</strain>
    </source>
</reference>
<reference key="2">
    <citation type="journal article" date="2017" name="Plant J.">
        <title>Araport11: a complete reannotation of the Arabidopsis thaliana reference genome.</title>
        <authorList>
            <person name="Cheng C.Y."/>
            <person name="Krishnakumar V."/>
            <person name="Chan A.P."/>
            <person name="Thibaud-Nissen F."/>
            <person name="Schobel S."/>
            <person name="Town C.D."/>
        </authorList>
    </citation>
    <scope>GENOME REANNOTATION</scope>
    <source>
        <strain>cv. Columbia</strain>
    </source>
</reference>
<gene>
    <name type="ordered locus">At5g57200</name>
    <name type="ORF">MJB24.1</name>
</gene>
<evidence type="ECO:0000250" key="1"/>
<evidence type="ECO:0000255" key="2">
    <source>
        <dbReference type="PROSITE-ProRule" id="PRU00243"/>
    </source>
</evidence>
<evidence type="ECO:0000256" key="3">
    <source>
        <dbReference type="SAM" id="MobiDB-lite"/>
    </source>
</evidence>
<feature type="chain" id="PRO_0000187073" description="Putative clathrin assembly protein At5g57200">
    <location>
        <begin position="1"/>
        <end position="591"/>
    </location>
</feature>
<feature type="domain" description="ENTH" evidence="2">
    <location>
        <begin position="24"/>
        <end position="161"/>
    </location>
</feature>
<feature type="region of interest" description="Disordered" evidence="3">
    <location>
        <begin position="310"/>
        <end position="381"/>
    </location>
</feature>
<feature type="region of interest" description="Disordered" evidence="3">
    <location>
        <begin position="536"/>
        <end position="591"/>
    </location>
</feature>
<feature type="compositionally biased region" description="Acidic residues" evidence="3">
    <location>
        <begin position="323"/>
        <end position="345"/>
    </location>
</feature>
<feature type="compositionally biased region" description="Acidic residues" evidence="3">
    <location>
        <begin position="355"/>
        <end position="369"/>
    </location>
</feature>
<feature type="compositionally biased region" description="Low complexity" evidence="3">
    <location>
        <begin position="553"/>
        <end position="564"/>
    </location>
</feature>
<feature type="compositionally biased region" description="Polar residues" evidence="3">
    <location>
        <begin position="577"/>
        <end position="591"/>
    </location>
</feature>
<organism>
    <name type="scientific">Arabidopsis thaliana</name>
    <name type="common">Mouse-ear cress</name>
    <dbReference type="NCBI Taxonomy" id="3702"/>
    <lineage>
        <taxon>Eukaryota</taxon>
        <taxon>Viridiplantae</taxon>
        <taxon>Streptophyta</taxon>
        <taxon>Embryophyta</taxon>
        <taxon>Tracheophyta</taxon>
        <taxon>Spermatophyta</taxon>
        <taxon>Magnoliopsida</taxon>
        <taxon>eudicotyledons</taxon>
        <taxon>Gunneridae</taxon>
        <taxon>Pentapetalae</taxon>
        <taxon>rosids</taxon>
        <taxon>malvids</taxon>
        <taxon>Brassicales</taxon>
        <taxon>Brassicaceae</taxon>
        <taxon>Camelineae</taxon>
        <taxon>Arabidopsis</taxon>
    </lineage>
</organism>
<comment type="subcellular location">
    <subcellularLocation>
        <location evidence="1">Membrane</location>
        <location evidence="1">Clathrin-coated pit</location>
    </subcellularLocation>
    <subcellularLocation>
        <location evidence="1">Golgi apparatus</location>
    </subcellularLocation>
    <subcellularLocation>
        <location evidence="1">Cytoplasmic vesicle</location>
        <location evidence="1">Clathrin-coated vesicle</location>
    </subcellularLocation>
    <text evidence="1">Colocalized with clathrin in the Golgi area.</text>
</comment>
<proteinExistence type="inferred from homology"/>
<accession>Q9LVD8</accession>
<sequence>MGTFTSFRKAYGALKDTTTVGLAKVNSEFKDLDIAIVKATNHVESPPKERHVRKIFSATSVIQPRADVAYCIHALSKRLSKTRNWVVAMKVLIVIHRTLREGDPTFREELLNYSHRRHILRISNFKDDTSPLAWDCSAWVRTYALFLEERLECYRVLKYDIEAERLPKASGAASKTHRTRMLSGEDLLEQLPALQQLLYRLIGCQPEGAAYSNYLIQYALALVLKESFKIYCAINDGIINLVDMFFEMSRHDAVKALNIYKRAGQQAENLAEFYDYCKGLELARNFQFPTLRQPPPSFLATMEEYIKEAPQSGSVQKKLEYQEKEEEEQEQEEEQPEEPAEEENQNENTENDQPLIEEEEEEPKEEIEVEEAKPSPLIDTDDLLGLHEINPKAAEIEQNNAFSLAIYPPGHETSAPSNSLSLIEAGGSGWELALVTPQNNNNNNNNPRPVIATKLGGGFDNLLLDSLYEDDTARRQIQLTNAGYGFGATAIPGALASSNPNPFGVQQDPFAMSNNMAPPTNVQMAMQQQQMMMMNNQSPYNNNYSPYHHHQFSPNPSTSSSPNPFGDPFLALPAPPSSTTQQQYSPNHMLL</sequence>
<dbReference type="EMBL" id="AB019233">
    <property type="protein sequence ID" value="BAA96943.1"/>
    <property type="molecule type" value="Genomic_DNA"/>
</dbReference>
<dbReference type="EMBL" id="CP002688">
    <property type="protein sequence ID" value="AED96865.1"/>
    <property type="molecule type" value="Genomic_DNA"/>
</dbReference>
<dbReference type="RefSeq" id="NP_200530.1">
    <property type="nucleotide sequence ID" value="NM_125102.2"/>
</dbReference>
<dbReference type="SMR" id="Q9LVD8"/>
<dbReference type="FunCoup" id="Q9LVD8">
    <property type="interactions" value="842"/>
</dbReference>
<dbReference type="STRING" id="3702.Q9LVD8"/>
<dbReference type="iPTMnet" id="Q9LVD8"/>
<dbReference type="PaxDb" id="3702-AT5G57200.1"/>
<dbReference type="ProteomicsDB" id="240591"/>
<dbReference type="EnsemblPlants" id="AT5G57200.1">
    <property type="protein sequence ID" value="AT5G57200.1"/>
    <property type="gene ID" value="AT5G57200"/>
</dbReference>
<dbReference type="GeneID" id="835826"/>
<dbReference type="Gramene" id="AT5G57200.1">
    <property type="protein sequence ID" value="AT5G57200.1"/>
    <property type="gene ID" value="AT5G57200"/>
</dbReference>
<dbReference type="KEGG" id="ath:AT5G57200"/>
<dbReference type="Araport" id="AT5G57200"/>
<dbReference type="TAIR" id="AT5G57200">
    <property type="gene designation" value="PICALM2A"/>
</dbReference>
<dbReference type="eggNOG" id="KOG0251">
    <property type="taxonomic scope" value="Eukaryota"/>
</dbReference>
<dbReference type="HOGENOM" id="CLU_014098_2_1_1"/>
<dbReference type="InParanoid" id="Q9LVD8"/>
<dbReference type="OMA" id="RLEYHER"/>
<dbReference type="PhylomeDB" id="Q9LVD8"/>
<dbReference type="PRO" id="PR:Q9LVD8"/>
<dbReference type="Proteomes" id="UP000006548">
    <property type="component" value="Chromosome 5"/>
</dbReference>
<dbReference type="ExpressionAtlas" id="Q9LVD8">
    <property type="expression patterns" value="baseline and differential"/>
</dbReference>
<dbReference type="GO" id="GO:0005905">
    <property type="term" value="C:clathrin-coated pit"/>
    <property type="evidence" value="ECO:0007669"/>
    <property type="project" value="UniProtKB-SubCell"/>
</dbReference>
<dbReference type="GO" id="GO:0030136">
    <property type="term" value="C:clathrin-coated vesicle"/>
    <property type="evidence" value="ECO:0007669"/>
    <property type="project" value="UniProtKB-SubCell"/>
</dbReference>
<dbReference type="GO" id="GO:0005794">
    <property type="term" value="C:Golgi apparatus"/>
    <property type="evidence" value="ECO:0007669"/>
    <property type="project" value="UniProtKB-SubCell"/>
</dbReference>
<dbReference type="GO" id="GO:0009536">
    <property type="term" value="C:plastid"/>
    <property type="evidence" value="ECO:0007005"/>
    <property type="project" value="TAIR"/>
</dbReference>
<dbReference type="GO" id="GO:0005545">
    <property type="term" value="F:1-phosphatidylinositol binding"/>
    <property type="evidence" value="ECO:0007669"/>
    <property type="project" value="InterPro"/>
</dbReference>
<dbReference type="GO" id="GO:0030276">
    <property type="term" value="F:clathrin binding"/>
    <property type="evidence" value="ECO:0007669"/>
    <property type="project" value="InterPro"/>
</dbReference>
<dbReference type="GO" id="GO:0048268">
    <property type="term" value="P:clathrin coat assembly"/>
    <property type="evidence" value="ECO:0007669"/>
    <property type="project" value="InterPro"/>
</dbReference>
<dbReference type="GO" id="GO:0072583">
    <property type="term" value="P:clathrin-dependent endocytosis"/>
    <property type="evidence" value="ECO:0007669"/>
    <property type="project" value="InterPro"/>
</dbReference>
<dbReference type="CDD" id="cd03564">
    <property type="entry name" value="ANTH_N"/>
    <property type="match status" value="1"/>
</dbReference>
<dbReference type="FunFam" id="1.25.40.90:FF:000005">
    <property type="entry name" value="Clathrin assembly protein AP180"/>
    <property type="match status" value="1"/>
</dbReference>
<dbReference type="FunFam" id="1.20.58.150:FF:000003">
    <property type="entry name" value="Putative clathrin assembly protein"/>
    <property type="match status" value="1"/>
</dbReference>
<dbReference type="Gene3D" id="1.25.40.90">
    <property type="match status" value="1"/>
</dbReference>
<dbReference type="Gene3D" id="1.20.58.150">
    <property type="entry name" value="ANTH domain"/>
    <property type="match status" value="1"/>
</dbReference>
<dbReference type="InterPro" id="IPR011417">
    <property type="entry name" value="ANTH_dom"/>
</dbReference>
<dbReference type="InterPro" id="IPR014712">
    <property type="entry name" value="ANTH_dom_sf"/>
</dbReference>
<dbReference type="InterPro" id="IPR048050">
    <property type="entry name" value="ANTH_N_plant"/>
</dbReference>
<dbReference type="InterPro" id="IPR045192">
    <property type="entry name" value="AP180-like"/>
</dbReference>
<dbReference type="InterPro" id="IPR013809">
    <property type="entry name" value="ENTH"/>
</dbReference>
<dbReference type="InterPro" id="IPR008942">
    <property type="entry name" value="ENTH_VHS"/>
</dbReference>
<dbReference type="PANTHER" id="PTHR22951">
    <property type="entry name" value="CLATHRIN ASSEMBLY PROTEIN"/>
    <property type="match status" value="1"/>
</dbReference>
<dbReference type="PANTHER" id="PTHR22951:SF5">
    <property type="entry name" value="PHOSPHATIDYLINOSITOL-BINDING CLATHRIN ASSEMBLY PROTEIN LAP"/>
    <property type="match status" value="1"/>
</dbReference>
<dbReference type="Pfam" id="PF07651">
    <property type="entry name" value="ANTH"/>
    <property type="match status" value="1"/>
</dbReference>
<dbReference type="SMART" id="SM00273">
    <property type="entry name" value="ENTH"/>
    <property type="match status" value="1"/>
</dbReference>
<dbReference type="SUPFAM" id="SSF48464">
    <property type="entry name" value="ENTH/VHS domain"/>
    <property type="match status" value="1"/>
</dbReference>
<dbReference type="SUPFAM" id="SSF89009">
    <property type="entry name" value="GAT-like domain"/>
    <property type="match status" value="1"/>
</dbReference>
<dbReference type="PROSITE" id="PS50942">
    <property type="entry name" value="ENTH"/>
    <property type="match status" value="1"/>
</dbReference>